<protein>
    <recommendedName>
        <fullName evidence="1">CTP synthase</fullName>
        <ecNumber evidence="1">6.3.4.2</ecNumber>
    </recommendedName>
    <alternativeName>
        <fullName evidence="1">Cytidine 5'-triphosphate synthase</fullName>
    </alternativeName>
    <alternativeName>
        <fullName evidence="1">Cytidine triphosphate synthetase</fullName>
        <shortName evidence="1">CTP synthetase</shortName>
        <shortName evidence="1">CTPS</shortName>
    </alternativeName>
    <alternativeName>
        <fullName evidence="1">UTP--ammonia ligase</fullName>
    </alternativeName>
</protein>
<name>PYRG_ECO8A</name>
<feature type="chain" id="PRO_1000139443" description="CTP synthase">
    <location>
        <begin position="1"/>
        <end position="545"/>
    </location>
</feature>
<feature type="domain" description="Glutamine amidotransferase type-1" evidence="1">
    <location>
        <begin position="291"/>
        <end position="542"/>
    </location>
</feature>
<feature type="region of interest" description="Amidoligase domain" evidence="1">
    <location>
        <begin position="1"/>
        <end position="266"/>
    </location>
</feature>
<feature type="active site" description="Nucleophile; for glutamine hydrolysis" evidence="1">
    <location>
        <position position="379"/>
    </location>
</feature>
<feature type="active site" evidence="1">
    <location>
        <position position="515"/>
    </location>
</feature>
<feature type="active site" evidence="1">
    <location>
        <position position="517"/>
    </location>
</feature>
<feature type="binding site" evidence="1">
    <location>
        <position position="14"/>
    </location>
    <ligand>
        <name>CTP</name>
        <dbReference type="ChEBI" id="CHEBI:37563"/>
        <note>allosteric inhibitor</note>
    </ligand>
</feature>
<feature type="binding site" evidence="1">
    <location>
        <position position="14"/>
    </location>
    <ligand>
        <name>UTP</name>
        <dbReference type="ChEBI" id="CHEBI:46398"/>
    </ligand>
</feature>
<feature type="binding site" evidence="1">
    <location>
        <begin position="15"/>
        <end position="20"/>
    </location>
    <ligand>
        <name>ATP</name>
        <dbReference type="ChEBI" id="CHEBI:30616"/>
    </ligand>
</feature>
<feature type="binding site" evidence="1">
    <location>
        <position position="72"/>
    </location>
    <ligand>
        <name>ATP</name>
        <dbReference type="ChEBI" id="CHEBI:30616"/>
    </ligand>
</feature>
<feature type="binding site" evidence="1">
    <location>
        <position position="72"/>
    </location>
    <ligand>
        <name>Mg(2+)</name>
        <dbReference type="ChEBI" id="CHEBI:18420"/>
    </ligand>
</feature>
<feature type="binding site" evidence="1">
    <location>
        <position position="140"/>
    </location>
    <ligand>
        <name>Mg(2+)</name>
        <dbReference type="ChEBI" id="CHEBI:18420"/>
    </ligand>
</feature>
<feature type="binding site" evidence="1">
    <location>
        <begin position="147"/>
        <end position="149"/>
    </location>
    <ligand>
        <name>CTP</name>
        <dbReference type="ChEBI" id="CHEBI:37563"/>
        <note>allosteric inhibitor</note>
    </ligand>
</feature>
<feature type="binding site" evidence="1">
    <location>
        <begin position="187"/>
        <end position="192"/>
    </location>
    <ligand>
        <name>CTP</name>
        <dbReference type="ChEBI" id="CHEBI:37563"/>
        <note>allosteric inhibitor</note>
    </ligand>
</feature>
<feature type="binding site" evidence="1">
    <location>
        <begin position="187"/>
        <end position="192"/>
    </location>
    <ligand>
        <name>UTP</name>
        <dbReference type="ChEBI" id="CHEBI:46398"/>
    </ligand>
</feature>
<feature type="binding site" evidence="1">
    <location>
        <position position="223"/>
    </location>
    <ligand>
        <name>CTP</name>
        <dbReference type="ChEBI" id="CHEBI:37563"/>
        <note>allosteric inhibitor</note>
    </ligand>
</feature>
<feature type="binding site" evidence="1">
    <location>
        <position position="223"/>
    </location>
    <ligand>
        <name>UTP</name>
        <dbReference type="ChEBI" id="CHEBI:46398"/>
    </ligand>
</feature>
<feature type="binding site" evidence="1">
    <location>
        <begin position="239"/>
        <end position="241"/>
    </location>
    <ligand>
        <name>ATP</name>
        <dbReference type="ChEBI" id="CHEBI:30616"/>
    </ligand>
</feature>
<feature type="binding site" evidence="1">
    <location>
        <position position="352"/>
    </location>
    <ligand>
        <name>L-glutamine</name>
        <dbReference type="ChEBI" id="CHEBI:58359"/>
    </ligand>
</feature>
<feature type="binding site" evidence="1">
    <location>
        <begin position="380"/>
        <end position="383"/>
    </location>
    <ligand>
        <name>L-glutamine</name>
        <dbReference type="ChEBI" id="CHEBI:58359"/>
    </ligand>
</feature>
<feature type="binding site" evidence="1">
    <location>
        <position position="403"/>
    </location>
    <ligand>
        <name>L-glutamine</name>
        <dbReference type="ChEBI" id="CHEBI:58359"/>
    </ligand>
</feature>
<feature type="binding site" evidence="1">
    <location>
        <position position="470"/>
    </location>
    <ligand>
        <name>L-glutamine</name>
        <dbReference type="ChEBI" id="CHEBI:58359"/>
    </ligand>
</feature>
<evidence type="ECO:0000255" key="1">
    <source>
        <dbReference type="HAMAP-Rule" id="MF_01227"/>
    </source>
</evidence>
<proteinExistence type="inferred from homology"/>
<reference key="1">
    <citation type="journal article" date="2009" name="PLoS Genet.">
        <title>Organised genome dynamics in the Escherichia coli species results in highly diverse adaptive paths.</title>
        <authorList>
            <person name="Touchon M."/>
            <person name="Hoede C."/>
            <person name="Tenaillon O."/>
            <person name="Barbe V."/>
            <person name="Baeriswyl S."/>
            <person name="Bidet P."/>
            <person name="Bingen E."/>
            <person name="Bonacorsi S."/>
            <person name="Bouchier C."/>
            <person name="Bouvet O."/>
            <person name="Calteau A."/>
            <person name="Chiapello H."/>
            <person name="Clermont O."/>
            <person name="Cruveiller S."/>
            <person name="Danchin A."/>
            <person name="Diard M."/>
            <person name="Dossat C."/>
            <person name="Karoui M.E."/>
            <person name="Frapy E."/>
            <person name="Garry L."/>
            <person name="Ghigo J.M."/>
            <person name="Gilles A.M."/>
            <person name="Johnson J."/>
            <person name="Le Bouguenec C."/>
            <person name="Lescat M."/>
            <person name="Mangenot S."/>
            <person name="Martinez-Jehanne V."/>
            <person name="Matic I."/>
            <person name="Nassif X."/>
            <person name="Oztas S."/>
            <person name="Petit M.A."/>
            <person name="Pichon C."/>
            <person name="Rouy Z."/>
            <person name="Ruf C.S."/>
            <person name="Schneider D."/>
            <person name="Tourret J."/>
            <person name="Vacherie B."/>
            <person name="Vallenet D."/>
            <person name="Medigue C."/>
            <person name="Rocha E.P.C."/>
            <person name="Denamur E."/>
        </authorList>
    </citation>
    <scope>NUCLEOTIDE SEQUENCE [LARGE SCALE GENOMIC DNA]</scope>
    <source>
        <strain>IAI1</strain>
    </source>
</reference>
<sequence length="545" mass="60374">MTTNYIFVTGGVVSSLGKGIAAASLAAILEARGLNVTIMKLDPYINVDPGTMSPIQHGEVFVTEDGAETDLDLGHYERFIRTKMSRRNNFTTGRIYSDVLRKERRGDYLGATVQVIPHITNAIKERVLEGGEGHDVVLVEIGGTVGDIESLPFLEAIRQMAVEIGREHTLFMHLTLVPYMAASGEVKTKPTQHSVKELLSIGIQPDILICRSDRAVPANERAKIALFCNVPEKAVISLKDVDSIYKIPGLLKSQGLDDYICKRFSLNCPEANLSEWEQVIFEEANPVSEVTIGMVGKYIELPDAYKSVIEALKHGGLKNRVSVNIKLIDSQDVETRGVEILKGLDAILVPGGFGYRGVEGMITTARFARENNIPYLGICLGMQVALIDYARHVANMENANSTEFVPDCKYPVVALITEWRDENGNVEVRSEKSDLGGTMRLGAQQCQLVDDSLVRQLYNAPTIVERHRHRYEVNNMLLKQIEDAGLRVAGRSGDDQLVEIIEVPNHPWFVACQFHPEFTSTPRDGHPLFAGFVKAASEFQKRQAK</sequence>
<dbReference type="EC" id="6.3.4.2" evidence="1"/>
<dbReference type="EMBL" id="CU928160">
    <property type="protein sequence ID" value="CAQ99708.1"/>
    <property type="molecule type" value="Genomic_DNA"/>
</dbReference>
<dbReference type="RefSeq" id="WP_000210878.1">
    <property type="nucleotide sequence ID" value="NC_011741.1"/>
</dbReference>
<dbReference type="SMR" id="B7LXJ6"/>
<dbReference type="MEROPS" id="C26.964"/>
<dbReference type="GeneID" id="93779218"/>
<dbReference type="KEGG" id="ecr:ECIAI1_2888"/>
<dbReference type="HOGENOM" id="CLU_011675_5_0_6"/>
<dbReference type="UniPathway" id="UPA00159">
    <property type="reaction ID" value="UER00277"/>
</dbReference>
<dbReference type="GO" id="GO:0005829">
    <property type="term" value="C:cytosol"/>
    <property type="evidence" value="ECO:0007669"/>
    <property type="project" value="TreeGrafter"/>
</dbReference>
<dbReference type="GO" id="GO:0005524">
    <property type="term" value="F:ATP binding"/>
    <property type="evidence" value="ECO:0007669"/>
    <property type="project" value="UniProtKB-KW"/>
</dbReference>
<dbReference type="GO" id="GO:0003883">
    <property type="term" value="F:CTP synthase activity"/>
    <property type="evidence" value="ECO:0007669"/>
    <property type="project" value="UniProtKB-UniRule"/>
</dbReference>
<dbReference type="GO" id="GO:0004359">
    <property type="term" value="F:glutaminase activity"/>
    <property type="evidence" value="ECO:0007669"/>
    <property type="project" value="RHEA"/>
</dbReference>
<dbReference type="GO" id="GO:0042802">
    <property type="term" value="F:identical protein binding"/>
    <property type="evidence" value="ECO:0007669"/>
    <property type="project" value="TreeGrafter"/>
</dbReference>
<dbReference type="GO" id="GO:0046872">
    <property type="term" value="F:metal ion binding"/>
    <property type="evidence" value="ECO:0007669"/>
    <property type="project" value="UniProtKB-KW"/>
</dbReference>
<dbReference type="GO" id="GO:0044210">
    <property type="term" value="P:'de novo' CTP biosynthetic process"/>
    <property type="evidence" value="ECO:0007669"/>
    <property type="project" value="UniProtKB-UniRule"/>
</dbReference>
<dbReference type="GO" id="GO:0019856">
    <property type="term" value="P:pyrimidine nucleobase biosynthetic process"/>
    <property type="evidence" value="ECO:0007669"/>
    <property type="project" value="TreeGrafter"/>
</dbReference>
<dbReference type="CDD" id="cd03113">
    <property type="entry name" value="CTPS_N"/>
    <property type="match status" value="1"/>
</dbReference>
<dbReference type="CDD" id="cd01746">
    <property type="entry name" value="GATase1_CTP_Synthase"/>
    <property type="match status" value="1"/>
</dbReference>
<dbReference type="FunFam" id="3.40.50.300:FF:000009">
    <property type="entry name" value="CTP synthase"/>
    <property type="match status" value="1"/>
</dbReference>
<dbReference type="FunFam" id="3.40.50.880:FF:000002">
    <property type="entry name" value="CTP synthase"/>
    <property type="match status" value="1"/>
</dbReference>
<dbReference type="Gene3D" id="3.40.50.880">
    <property type="match status" value="1"/>
</dbReference>
<dbReference type="Gene3D" id="3.40.50.300">
    <property type="entry name" value="P-loop containing nucleotide triphosphate hydrolases"/>
    <property type="match status" value="1"/>
</dbReference>
<dbReference type="HAMAP" id="MF_01227">
    <property type="entry name" value="PyrG"/>
    <property type="match status" value="1"/>
</dbReference>
<dbReference type="InterPro" id="IPR029062">
    <property type="entry name" value="Class_I_gatase-like"/>
</dbReference>
<dbReference type="InterPro" id="IPR004468">
    <property type="entry name" value="CTP_synthase"/>
</dbReference>
<dbReference type="InterPro" id="IPR017456">
    <property type="entry name" value="CTP_synthase_N"/>
</dbReference>
<dbReference type="InterPro" id="IPR017926">
    <property type="entry name" value="GATASE"/>
</dbReference>
<dbReference type="InterPro" id="IPR033828">
    <property type="entry name" value="GATase1_CTP_Synthase"/>
</dbReference>
<dbReference type="InterPro" id="IPR027417">
    <property type="entry name" value="P-loop_NTPase"/>
</dbReference>
<dbReference type="NCBIfam" id="NF003792">
    <property type="entry name" value="PRK05380.1"/>
    <property type="match status" value="1"/>
</dbReference>
<dbReference type="NCBIfam" id="TIGR00337">
    <property type="entry name" value="PyrG"/>
    <property type="match status" value="1"/>
</dbReference>
<dbReference type="PANTHER" id="PTHR11550">
    <property type="entry name" value="CTP SYNTHASE"/>
    <property type="match status" value="1"/>
</dbReference>
<dbReference type="PANTHER" id="PTHR11550:SF0">
    <property type="entry name" value="CTP SYNTHASE-RELATED"/>
    <property type="match status" value="1"/>
</dbReference>
<dbReference type="Pfam" id="PF06418">
    <property type="entry name" value="CTP_synth_N"/>
    <property type="match status" value="1"/>
</dbReference>
<dbReference type="Pfam" id="PF00117">
    <property type="entry name" value="GATase"/>
    <property type="match status" value="1"/>
</dbReference>
<dbReference type="SUPFAM" id="SSF52317">
    <property type="entry name" value="Class I glutamine amidotransferase-like"/>
    <property type="match status" value="1"/>
</dbReference>
<dbReference type="SUPFAM" id="SSF52540">
    <property type="entry name" value="P-loop containing nucleoside triphosphate hydrolases"/>
    <property type="match status" value="1"/>
</dbReference>
<dbReference type="PROSITE" id="PS51273">
    <property type="entry name" value="GATASE_TYPE_1"/>
    <property type="match status" value="1"/>
</dbReference>
<gene>
    <name evidence="1" type="primary">pyrG</name>
    <name type="ordered locus">ECIAI1_2888</name>
</gene>
<keyword id="KW-0067">ATP-binding</keyword>
<keyword id="KW-0315">Glutamine amidotransferase</keyword>
<keyword id="KW-0436">Ligase</keyword>
<keyword id="KW-0460">Magnesium</keyword>
<keyword id="KW-0479">Metal-binding</keyword>
<keyword id="KW-0547">Nucleotide-binding</keyword>
<keyword id="KW-0665">Pyrimidine biosynthesis</keyword>
<accession>B7LXJ6</accession>
<comment type="function">
    <text evidence="1">Catalyzes the ATP-dependent amination of UTP to CTP with either L-glutamine or ammonia as the source of nitrogen. Regulates intracellular CTP levels through interactions with the four ribonucleotide triphosphates.</text>
</comment>
<comment type="catalytic activity">
    <reaction evidence="1">
        <text>UTP + L-glutamine + ATP + H2O = CTP + L-glutamate + ADP + phosphate + 2 H(+)</text>
        <dbReference type="Rhea" id="RHEA:26426"/>
        <dbReference type="ChEBI" id="CHEBI:15377"/>
        <dbReference type="ChEBI" id="CHEBI:15378"/>
        <dbReference type="ChEBI" id="CHEBI:29985"/>
        <dbReference type="ChEBI" id="CHEBI:30616"/>
        <dbReference type="ChEBI" id="CHEBI:37563"/>
        <dbReference type="ChEBI" id="CHEBI:43474"/>
        <dbReference type="ChEBI" id="CHEBI:46398"/>
        <dbReference type="ChEBI" id="CHEBI:58359"/>
        <dbReference type="ChEBI" id="CHEBI:456216"/>
        <dbReference type="EC" id="6.3.4.2"/>
    </reaction>
</comment>
<comment type="catalytic activity">
    <reaction evidence="1">
        <text>L-glutamine + H2O = L-glutamate + NH4(+)</text>
        <dbReference type="Rhea" id="RHEA:15889"/>
        <dbReference type="ChEBI" id="CHEBI:15377"/>
        <dbReference type="ChEBI" id="CHEBI:28938"/>
        <dbReference type="ChEBI" id="CHEBI:29985"/>
        <dbReference type="ChEBI" id="CHEBI:58359"/>
    </reaction>
</comment>
<comment type="catalytic activity">
    <reaction evidence="1">
        <text>UTP + NH4(+) + ATP = CTP + ADP + phosphate + 2 H(+)</text>
        <dbReference type="Rhea" id="RHEA:16597"/>
        <dbReference type="ChEBI" id="CHEBI:15378"/>
        <dbReference type="ChEBI" id="CHEBI:28938"/>
        <dbReference type="ChEBI" id="CHEBI:30616"/>
        <dbReference type="ChEBI" id="CHEBI:37563"/>
        <dbReference type="ChEBI" id="CHEBI:43474"/>
        <dbReference type="ChEBI" id="CHEBI:46398"/>
        <dbReference type="ChEBI" id="CHEBI:456216"/>
    </reaction>
</comment>
<comment type="activity regulation">
    <text evidence="1">Allosterically activated by GTP, when glutamine is the substrate; GTP has no effect on the reaction when ammonia is the substrate. The allosteric effector GTP functions by stabilizing the protein conformation that binds the tetrahedral intermediate(s) formed during glutamine hydrolysis. Inhibited by the product CTP, via allosteric rather than competitive inhibition.</text>
</comment>
<comment type="pathway">
    <text evidence="1">Pyrimidine metabolism; CTP biosynthesis via de novo pathway; CTP from UDP: step 2/2.</text>
</comment>
<comment type="subunit">
    <text evidence="1">Homotetramer.</text>
</comment>
<comment type="miscellaneous">
    <text evidence="1">CTPSs have evolved a hybrid strategy for distinguishing between UTP and CTP. The overlapping regions of the product feedback inhibitory and substrate sites recognize a common feature in both compounds, the triphosphate moiety. To differentiate isosteric substrate and product pyrimidine rings, an additional pocket far from the expected kinase/ligase catalytic site, specifically recognizes the cytosine and ribose portions of the product inhibitor.</text>
</comment>
<comment type="similarity">
    <text evidence="1">Belongs to the CTP synthase family.</text>
</comment>
<organism>
    <name type="scientific">Escherichia coli O8 (strain IAI1)</name>
    <dbReference type="NCBI Taxonomy" id="585034"/>
    <lineage>
        <taxon>Bacteria</taxon>
        <taxon>Pseudomonadati</taxon>
        <taxon>Pseudomonadota</taxon>
        <taxon>Gammaproteobacteria</taxon>
        <taxon>Enterobacterales</taxon>
        <taxon>Enterobacteriaceae</taxon>
        <taxon>Escherichia</taxon>
    </lineage>
</organism>